<sequence length="93" mass="10633">MPRSLKKGPYVNYKLIKKIILNNLNLKKKKIIKTWSRSSTITPEFIGNTIAVHNGKIFIPIYISENMVGHKLGEFAPTRIFRGHSGSKKKPKK</sequence>
<comment type="function">
    <text evidence="1">Protein S19 forms a complex with S13 that binds strongly to the 16S ribosomal RNA.</text>
</comment>
<comment type="similarity">
    <text evidence="1">Belongs to the universal ribosomal protein uS19 family.</text>
</comment>
<proteinExistence type="inferred from homology"/>
<name>RS19_KARMG</name>
<feature type="chain" id="PRO_1000081799" description="Small ribosomal subunit protein uS19">
    <location>
        <begin position="1"/>
        <end position="93"/>
    </location>
</feature>
<reference key="1">
    <citation type="journal article" date="2007" name="Proc. Natl. Acad. Sci. U.S.A.">
        <title>Parallel genomic evolution and metabolic interdependence in an ancient symbiosis.</title>
        <authorList>
            <person name="McCutcheon J.P."/>
            <person name="Moran N.A."/>
        </authorList>
    </citation>
    <scope>NUCLEOTIDE SEQUENCE [LARGE SCALE GENOMIC DNA]</scope>
    <source>
        <strain>GWSS</strain>
    </source>
</reference>
<accession>A8Z672</accession>
<keyword id="KW-0687">Ribonucleoprotein</keyword>
<keyword id="KW-0689">Ribosomal protein</keyword>
<keyword id="KW-0694">RNA-binding</keyword>
<keyword id="KW-0699">rRNA-binding</keyword>
<dbReference type="EMBL" id="CP000770">
    <property type="protein sequence ID" value="ABS30623.1"/>
    <property type="molecule type" value="Genomic_DNA"/>
</dbReference>
<dbReference type="SMR" id="A8Z672"/>
<dbReference type="STRING" id="444179.SMGWSS_226"/>
<dbReference type="KEGG" id="smg:SMGWSS_226"/>
<dbReference type="HOGENOM" id="CLU_144911_0_1_10"/>
<dbReference type="Proteomes" id="UP000000781">
    <property type="component" value="Chromosome"/>
</dbReference>
<dbReference type="GO" id="GO:0005737">
    <property type="term" value="C:cytoplasm"/>
    <property type="evidence" value="ECO:0007669"/>
    <property type="project" value="UniProtKB-ARBA"/>
</dbReference>
<dbReference type="GO" id="GO:0015935">
    <property type="term" value="C:small ribosomal subunit"/>
    <property type="evidence" value="ECO:0007669"/>
    <property type="project" value="InterPro"/>
</dbReference>
<dbReference type="GO" id="GO:0019843">
    <property type="term" value="F:rRNA binding"/>
    <property type="evidence" value="ECO:0007669"/>
    <property type="project" value="UniProtKB-UniRule"/>
</dbReference>
<dbReference type="GO" id="GO:0003735">
    <property type="term" value="F:structural constituent of ribosome"/>
    <property type="evidence" value="ECO:0007669"/>
    <property type="project" value="InterPro"/>
</dbReference>
<dbReference type="GO" id="GO:0000028">
    <property type="term" value="P:ribosomal small subunit assembly"/>
    <property type="evidence" value="ECO:0007669"/>
    <property type="project" value="TreeGrafter"/>
</dbReference>
<dbReference type="GO" id="GO:0006412">
    <property type="term" value="P:translation"/>
    <property type="evidence" value="ECO:0007669"/>
    <property type="project" value="UniProtKB-UniRule"/>
</dbReference>
<dbReference type="FunFam" id="3.30.860.10:FF:000001">
    <property type="entry name" value="30S ribosomal protein S19"/>
    <property type="match status" value="1"/>
</dbReference>
<dbReference type="Gene3D" id="3.30.860.10">
    <property type="entry name" value="30s Ribosomal Protein S19, Chain A"/>
    <property type="match status" value="1"/>
</dbReference>
<dbReference type="HAMAP" id="MF_00531">
    <property type="entry name" value="Ribosomal_uS19"/>
    <property type="match status" value="1"/>
</dbReference>
<dbReference type="InterPro" id="IPR002222">
    <property type="entry name" value="Ribosomal_uS19"/>
</dbReference>
<dbReference type="InterPro" id="IPR005732">
    <property type="entry name" value="Ribosomal_uS19_bac-type"/>
</dbReference>
<dbReference type="InterPro" id="IPR020934">
    <property type="entry name" value="Ribosomal_uS19_CS"/>
</dbReference>
<dbReference type="InterPro" id="IPR023575">
    <property type="entry name" value="Ribosomal_uS19_SF"/>
</dbReference>
<dbReference type="NCBIfam" id="TIGR01050">
    <property type="entry name" value="rpsS_bact"/>
    <property type="match status" value="1"/>
</dbReference>
<dbReference type="PANTHER" id="PTHR11880">
    <property type="entry name" value="RIBOSOMAL PROTEIN S19P FAMILY MEMBER"/>
    <property type="match status" value="1"/>
</dbReference>
<dbReference type="PANTHER" id="PTHR11880:SF8">
    <property type="entry name" value="SMALL RIBOSOMAL SUBUNIT PROTEIN US19M"/>
    <property type="match status" value="1"/>
</dbReference>
<dbReference type="Pfam" id="PF00203">
    <property type="entry name" value="Ribosomal_S19"/>
    <property type="match status" value="1"/>
</dbReference>
<dbReference type="PIRSF" id="PIRSF002144">
    <property type="entry name" value="Ribosomal_S19"/>
    <property type="match status" value="1"/>
</dbReference>
<dbReference type="PRINTS" id="PR00975">
    <property type="entry name" value="RIBOSOMALS19"/>
</dbReference>
<dbReference type="SUPFAM" id="SSF54570">
    <property type="entry name" value="Ribosomal protein S19"/>
    <property type="match status" value="1"/>
</dbReference>
<dbReference type="PROSITE" id="PS00323">
    <property type="entry name" value="RIBOSOMAL_S19"/>
    <property type="match status" value="1"/>
</dbReference>
<gene>
    <name evidence="1" type="primary">rpsS</name>
    <name type="ordered locus">SMGWSS_226</name>
</gene>
<protein>
    <recommendedName>
        <fullName evidence="1">Small ribosomal subunit protein uS19</fullName>
    </recommendedName>
    <alternativeName>
        <fullName evidence="2">30S ribosomal protein S19</fullName>
    </alternativeName>
</protein>
<evidence type="ECO:0000255" key="1">
    <source>
        <dbReference type="HAMAP-Rule" id="MF_00531"/>
    </source>
</evidence>
<evidence type="ECO:0000305" key="2"/>
<organism>
    <name type="scientific">Karelsulcia muelleri (strain GWSS)</name>
    <name type="common">Sulcia muelleri</name>
    <dbReference type="NCBI Taxonomy" id="444179"/>
    <lineage>
        <taxon>Bacteria</taxon>
        <taxon>Pseudomonadati</taxon>
        <taxon>Bacteroidota</taxon>
        <taxon>Flavobacteriia</taxon>
        <taxon>Flavobacteriales</taxon>
        <taxon>Candidatus Karelsulcia</taxon>
    </lineage>
</organism>